<comment type="function">
    <text evidence="1">Associates with the EF-Tu.GDP complex and induces the exchange of GDP to GTP. It remains bound to the aminoacyl-tRNA.EF-Tu.GTP complex up to the GTP hydrolysis stage on the ribosome.</text>
</comment>
<comment type="subcellular location">
    <subcellularLocation>
        <location evidence="1">Cytoplasm</location>
    </subcellularLocation>
</comment>
<comment type="similarity">
    <text evidence="1">Belongs to the EF-Ts family.</text>
</comment>
<sequence>MAEITASLVKELRERTGAGMMDCKKALTEANGDIELAIENMRKSGAIKAAKKAGNVAADGVIKTKIDGNYGIILEVNCQTDFVAKDAGFQAFADKVLDAAVAGKITDVEVLKAQFEEERVALVAKIGENINIRRVAALEGDVLGSYQHGARIGVLVAAKGADEELVKHIAMHVAASKPEFIKPEDVSAEVVEKEYQVQLDIAMQSGKPKEIAEKMVEGRMKKFTGEVSLTGQPFVMEPSKTVGQLLKEHNAEVTGFIRFEVGEGIEKVETDFAAEVAAMSKQS</sequence>
<proteinExistence type="inferred from homology"/>
<name>EFTS_ECOBW</name>
<keyword id="KW-0963">Cytoplasm</keyword>
<keyword id="KW-0251">Elongation factor</keyword>
<keyword id="KW-0648">Protein biosynthesis</keyword>
<organism>
    <name type="scientific">Escherichia coli (strain K12 / MC4100 / BW2952)</name>
    <dbReference type="NCBI Taxonomy" id="595496"/>
    <lineage>
        <taxon>Bacteria</taxon>
        <taxon>Pseudomonadati</taxon>
        <taxon>Pseudomonadota</taxon>
        <taxon>Gammaproteobacteria</taxon>
        <taxon>Enterobacterales</taxon>
        <taxon>Enterobacteriaceae</taxon>
        <taxon>Escherichia</taxon>
    </lineage>
</organism>
<evidence type="ECO:0000255" key="1">
    <source>
        <dbReference type="HAMAP-Rule" id="MF_00050"/>
    </source>
</evidence>
<reference key="1">
    <citation type="journal article" date="2009" name="J. Bacteriol.">
        <title>Genomic sequencing reveals regulatory mutations and recombinational events in the widely used MC4100 lineage of Escherichia coli K-12.</title>
        <authorList>
            <person name="Ferenci T."/>
            <person name="Zhou Z."/>
            <person name="Betteridge T."/>
            <person name="Ren Y."/>
            <person name="Liu Y."/>
            <person name="Feng L."/>
            <person name="Reeves P.R."/>
            <person name="Wang L."/>
        </authorList>
    </citation>
    <scope>NUCLEOTIDE SEQUENCE [LARGE SCALE GENOMIC DNA]</scope>
    <source>
        <strain>K12 / MC4100 / BW2952</strain>
    </source>
</reference>
<gene>
    <name evidence="1" type="primary">tsf</name>
    <name type="ordered locus">BWG_0162</name>
</gene>
<accession>C4ZRR2</accession>
<feature type="chain" id="PRO_1000202238" description="Elongation factor Ts">
    <location>
        <begin position="1"/>
        <end position="283"/>
    </location>
</feature>
<feature type="region of interest" description="Involved in Mg(2+) ion dislocation from EF-Tu" evidence="1">
    <location>
        <begin position="80"/>
        <end position="83"/>
    </location>
</feature>
<protein>
    <recommendedName>
        <fullName evidence="1">Elongation factor Ts</fullName>
        <shortName evidence="1">EF-Ts</shortName>
    </recommendedName>
</protein>
<dbReference type="EMBL" id="CP001396">
    <property type="protein sequence ID" value="ACR65295.1"/>
    <property type="molecule type" value="Genomic_DNA"/>
</dbReference>
<dbReference type="RefSeq" id="WP_000818114.1">
    <property type="nucleotide sequence ID" value="NC_012759.1"/>
</dbReference>
<dbReference type="SMR" id="C4ZRR2"/>
<dbReference type="GeneID" id="93777255"/>
<dbReference type="KEGG" id="ebw:BWG_0162"/>
<dbReference type="HOGENOM" id="CLU_047155_0_2_6"/>
<dbReference type="GO" id="GO:0005737">
    <property type="term" value="C:cytoplasm"/>
    <property type="evidence" value="ECO:0007669"/>
    <property type="project" value="UniProtKB-SubCell"/>
</dbReference>
<dbReference type="GO" id="GO:0003746">
    <property type="term" value="F:translation elongation factor activity"/>
    <property type="evidence" value="ECO:0007669"/>
    <property type="project" value="UniProtKB-UniRule"/>
</dbReference>
<dbReference type="CDD" id="cd14275">
    <property type="entry name" value="UBA_EF-Ts"/>
    <property type="match status" value="1"/>
</dbReference>
<dbReference type="FunFam" id="1.10.286.20:FF:000001">
    <property type="entry name" value="Elongation factor Ts"/>
    <property type="match status" value="1"/>
</dbReference>
<dbReference type="FunFam" id="1.10.8.10:FF:000001">
    <property type="entry name" value="Elongation factor Ts"/>
    <property type="match status" value="1"/>
</dbReference>
<dbReference type="FunFam" id="3.30.479.20:FF:000001">
    <property type="entry name" value="Elongation factor Ts"/>
    <property type="match status" value="1"/>
</dbReference>
<dbReference type="Gene3D" id="1.10.286.20">
    <property type="match status" value="1"/>
</dbReference>
<dbReference type="Gene3D" id="1.10.8.10">
    <property type="entry name" value="DNA helicase RuvA subunit, C-terminal domain"/>
    <property type="match status" value="1"/>
</dbReference>
<dbReference type="Gene3D" id="3.30.479.20">
    <property type="entry name" value="Elongation factor Ts, dimerisation domain"/>
    <property type="match status" value="2"/>
</dbReference>
<dbReference type="HAMAP" id="MF_00050">
    <property type="entry name" value="EF_Ts"/>
    <property type="match status" value="1"/>
</dbReference>
<dbReference type="InterPro" id="IPR036402">
    <property type="entry name" value="EF-Ts_dimer_sf"/>
</dbReference>
<dbReference type="InterPro" id="IPR001816">
    <property type="entry name" value="Transl_elong_EFTs/EF1B"/>
</dbReference>
<dbReference type="InterPro" id="IPR014039">
    <property type="entry name" value="Transl_elong_EFTs/EF1B_dimer"/>
</dbReference>
<dbReference type="InterPro" id="IPR018101">
    <property type="entry name" value="Transl_elong_Ts_CS"/>
</dbReference>
<dbReference type="InterPro" id="IPR009060">
    <property type="entry name" value="UBA-like_sf"/>
</dbReference>
<dbReference type="NCBIfam" id="TIGR00116">
    <property type="entry name" value="tsf"/>
    <property type="match status" value="1"/>
</dbReference>
<dbReference type="PANTHER" id="PTHR11741">
    <property type="entry name" value="ELONGATION FACTOR TS"/>
    <property type="match status" value="1"/>
</dbReference>
<dbReference type="PANTHER" id="PTHR11741:SF0">
    <property type="entry name" value="ELONGATION FACTOR TS, MITOCHONDRIAL"/>
    <property type="match status" value="1"/>
</dbReference>
<dbReference type="Pfam" id="PF00889">
    <property type="entry name" value="EF_TS"/>
    <property type="match status" value="1"/>
</dbReference>
<dbReference type="SUPFAM" id="SSF54713">
    <property type="entry name" value="Elongation factor Ts (EF-Ts), dimerisation domain"/>
    <property type="match status" value="2"/>
</dbReference>
<dbReference type="SUPFAM" id="SSF46934">
    <property type="entry name" value="UBA-like"/>
    <property type="match status" value="1"/>
</dbReference>
<dbReference type="PROSITE" id="PS01126">
    <property type="entry name" value="EF_TS_1"/>
    <property type="match status" value="1"/>
</dbReference>
<dbReference type="PROSITE" id="PS01127">
    <property type="entry name" value="EF_TS_2"/>
    <property type="match status" value="1"/>
</dbReference>